<feature type="chain" id="PRO_0000337367" description="Elongation factor Tu">
    <location>
        <begin position="1"/>
        <end position="397"/>
    </location>
</feature>
<feature type="domain" description="tr-type G">
    <location>
        <begin position="10"/>
        <end position="206"/>
    </location>
</feature>
<feature type="region of interest" description="G1" evidence="1">
    <location>
        <begin position="19"/>
        <end position="26"/>
    </location>
</feature>
<feature type="region of interest" description="G2" evidence="1">
    <location>
        <begin position="60"/>
        <end position="64"/>
    </location>
</feature>
<feature type="region of interest" description="G3" evidence="1">
    <location>
        <begin position="81"/>
        <end position="84"/>
    </location>
</feature>
<feature type="region of interest" description="G4" evidence="1">
    <location>
        <begin position="136"/>
        <end position="139"/>
    </location>
</feature>
<feature type="region of interest" description="G5" evidence="1">
    <location>
        <begin position="174"/>
        <end position="176"/>
    </location>
</feature>
<feature type="binding site" evidence="2">
    <location>
        <begin position="19"/>
        <end position="26"/>
    </location>
    <ligand>
        <name>GTP</name>
        <dbReference type="ChEBI" id="CHEBI:37565"/>
    </ligand>
</feature>
<feature type="binding site" evidence="2">
    <location>
        <position position="26"/>
    </location>
    <ligand>
        <name>Mg(2+)</name>
        <dbReference type="ChEBI" id="CHEBI:18420"/>
    </ligand>
</feature>
<feature type="binding site" evidence="2">
    <location>
        <begin position="81"/>
        <end position="85"/>
    </location>
    <ligand>
        <name>GTP</name>
        <dbReference type="ChEBI" id="CHEBI:37565"/>
    </ligand>
</feature>
<feature type="binding site" evidence="2">
    <location>
        <begin position="136"/>
        <end position="139"/>
    </location>
    <ligand>
        <name>GTP</name>
        <dbReference type="ChEBI" id="CHEBI:37565"/>
    </ligand>
</feature>
<proteinExistence type="inferred from homology"/>
<gene>
    <name evidence="2" type="primary">tuf1</name>
    <name type="ordered locus">CBUD_1856</name>
</gene>
<gene>
    <name evidence="2" type="primary">tuf2</name>
    <name type="ordered locus">CBUD_1870</name>
</gene>
<evidence type="ECO:0000250" key="1"/>
<evidence type="ECO:0000255" key="2">
    <source>
        <dbReference type="HAMAP-Rule" id="MF_00118"/>
    </source>
</evidence>
<reference key="1">
    <citation type="journal article" date="2009" name="Infect. Immun.">
        <title>Comparative genomics reveal extensive transposon-mediated genomic plasticity and diversity among potential effector proteins within the genus Coxiella.</title>
        <authorList>
            <person name="Beare P.A."/>
            <person name="Unsworth N."/>
            <person name="Andoh M."/>
            <person name="Voth D.E."/>
            <person name="Omsland A."/>
            <person name="Gilk S.D."/>
            <person name="Williams K.P."/>
            <person name="Sobral B.W."/>
            <person name="Kupko J.J. III"/>
            <person name="Porcella S.F."/>
            <person name="Samuel J.E."/>
            <person name="Heinzen R.A."/>
        </authorList>
    </citation>
    <scope>NUCLEOTIDE SEQUENCE [LARGE SCALE GENOMIC DNA]</scope>
    <source>
        <strain>Dugway 5J108-111</strain>
    </source>
</reference>
<sequence>MSKEKFVREKPHVNVGTIGHVDHGKTTLTAALTKVLSEKYGGEKKAFDQIDNAPEERARGITIATSHVEYQSDKRHYAHVDCPGHADYVKNMITGAAQMDGAILVVSAADGPMPQTREHIVLAKQVGVPNIVVYLNKADMVDDKELLELVEMEVRDLLNSYDFPGDETPIIVGSALKALEGDKSEVGEPSIIKLVETMDTYFPQPERAIDKPFLMPIEDVFSISGRGTVVTGRVERGIIKVGDEIEIVGIKDTTKTTCTGVEMFRKLLDEGQAGDNVGILLRGTKREEVERGQVLAKPGSITPHKKFEAEIYVLSKEEGGRHTPFLQGYRPQFYFRTTDVTGQLLSLPEGIEMVMPGDNVKVTVELIAPVAMDEGLRFAVREGGRTVGAGVVTKIIE</sequence>
<organism>
    <name type="scientific">Coxiella burnetii (strain Dugway 5J108-111)</name>
    <dbReference type="NCBI Taxonomy" id="434922"/>
    <lineage>
        <taxon>Bacteria</taxon>
        <taxon>Pseudomonadati</taxon>
        <taxon>Pseudomonadota</taxon>
        <taxon>Gammaproteobacteria</taxon>
        <taxon>Legionellales</taxon>
        <taxon>Coxiellaceae</taxon>
        <taxon>Coxiella</taxon>
    </lineage>
</organism>
<comment type="function">
    <text evidence="2">GTP hydrolase that promotes the GTP-dependent binding of aminoacyl-tRNA to the A-site of ribosomes during protein biosynthesis.</text>
</comment>
<comment type="catalytic activity">
    <reaction evidence="2">
        <text>GTP + H2O = GDP + phosphate + H(+)</text>
        <dbReference type="Rhea" id="RHEA:19669"/>
        <dbReference type="ChEBI" id="CHEBI:15377"/>
        <dbReference type="ChEBI" id="CHEBI:15378"/>
        <dbReference type="ChEBI" id="CHEBI:37565"/>
        <dbReference type="ChEBI" id="CHEBI:43474"/>
        <dbReference type="ChEBI" id="CHEBI:58189"/>
        <dbReference type="EC" id="3.6.5.3"/>
    </reaction>
    <physiologicalReaction direction="left-to-right" evidence="2">
        <dbReference type="Rhea" id="RHEA:19670"/>
    </physiologicalReaction>
</comment>
<comment type="subunit">
    <text evidence="2">Monomer.</text>
</comment>
<comment type="subcellular location">
    <subcellularLocation>
        <location evidence="2">Cytoplasm</location>
    </subcellularLocation>
</comment>
<comment type="similarity">
    <text evidence="2">Belongs to the TRAFAC class translation factor GTPase superfamily. Classic translation factor GTPase family. EF-Tu/EF-1A subfamily.</text>
</comment>
<keyword id="KW-0963">Cytoplasm</keyword>
<keyword id="KW-0251">Elongation factor</keyword>
<keyword id="KW-0342">GTP-binding</keyword>
<keyword id="KW-0378">Hydrolase</keyword>
<keyword id="KW-0460">Magnesium</keyword>
<keyword id="KW-0479">Metal-binding</keyword>
<keyword id="KW-0547">Nucleotide-binding</keyword>
<keyword id="KW-0648">Protein biosynthesis</keyword>
<accession>A9KD33</accession>
<protein>
    <recommendedName>
        <fullName evidence="2">Elongation factor Tu</fullName>
        <shortName evidence="2">EF-Tu</shortName>
        <ecNumber evidence="2">3.6.5.3</ecNumber>
    </recommendedName>
</protein>
<name>EFTU_COXBN</name>
<dbReference type="EC" id="3.6.5.3" evidence="2"/>
<dbReference type="EMBL" id="CP000733">
    <property type="protein sequence ID" value="ABS77089.1"/>
    <property type="molecule type" value="Genomic_DNA"/>
</dbReference>
<dbReference type="EMBL" id="CP000733">
    <property type="protein sequence ID" value="ABS77285.1"/>
    <property type="molecule type" value="Genomic_DNA"/>
</dbReference>
<dbReference type="SMR" id="A9KD33"/>
<dbReference type="KEGG" id="cbd:CBUD_1856"/>
<dbReference type="KEGG" id="cbd:CBUD_1870"/>
<dbReference type="HOGENOM" id="CLU_007265_0_1_6"/>
<dbReference type="Proteomes" id="UP000008555">
    <property type="component" value="Chromosome"/>
</dbReference>
<dbReference type="GO" id="GO:0005829">
    <property type="term" value="C:cytosol"/>
    <property type="evidence" value="ECO:0007669"/>
    <property type="project" value="TreeGrafter"/>
</dbReference>
<dbReference type="GO" id="GO:0005525">
    <property type="term" value="F:GTP binding"/>
    <property type="evidence" value="ECO:0007669"/>
    <property type="project" value="UniProtKB-UniRule"/>
</dbReference>
<dbReference type="GO" id="GO:0003924">
    <property type="term" value="F:GTPase activity"/>
    <property type="evidence" value="ECO:0007669"/>
    <property type="project" value="InterPro"/>
</dbReference>
<dbReference type="GO" id="GO:0097216">
    <property type="term" value="F:guanosine tetraphosphate binding"/>
    <property type="evidence" value="ECO:0007669"/>
    <property type="project" value="UniProtKB-ARBA"/>
</dbReference>
<dbReference type="GO" id="GO:0003746">
    <property type="term" value="F:translation elongation factor activity"/>
    <property type="evidence" value="ECO:0007669"/>
    <property type="project" value="UniProtKB-UniRule"/>
</dbReference>
<dbReference type="CDD" id="cd01884">
    <property type="entry name" value="EF_Tu"/>
    <property type="match status" value="1"/>
</dbReference>
<dbReference type="CDD" id="cd03697">
    <property type="entry name" value="EFTU_II"/>
    <property type="match status" value="1"/>
</dbReference>
<dbReference type="CDD" id="cd03707">
    <property type="entry name" value="EFTU_III"/>
    <property type="match status" value="1"/>
</dbReference>
<dbReference type="FunFam" id="2.40.30.10:FF:000001">
    <property type="entry name" value="Elongation factor Tu"/>
    <property type="match status" value="1"/>
</dbReference>
<dbReference type="FunFam" id="3.40.50.300:FF:000003">
    <property type="entry name" value="Elongation factor Tu"/>
    <property type="match status" value="1"/>
</dbReference>
<dbReference type="Gene3D" id="3.40.50.300">
    <property type="entry name" value="P-loop containing nucleotide triphosphate hydrolases"/>
    <property type="match status" value="1"/>
</dbReference>
<dbReference type="Gene3D" id="2.40.30.10">
    <property type="entry name" value="Translation factors"/>
    <property type="match status" value="2"/>
</dbReference>
<dbReference type="HAMAP" id="MF_00118_B">
    <property type="entry name" value="EF_Tu_B"/>
    <property type="match status" value="1"/>
</dbReference>
<dbReference type="InterPro" id="IPR041709">
    <property type="entry name" value="EF-Tu_GTP-bd"/>
</dbReference>
<dbReference type="InterPro" id="IPR050055">
    <property type="entry name" value="EF-Tu_GTPase"/>
</dbReference>
<dbReference type="InterPro" id="IPR004161">
    <property type="entry name" value="EFTu-like_2"/>
</dbReference>
<dbReference type="InterPro" id="IPR033720">
    <property type="entry name" value="EFTU_2"/>
</dbReference>
<dbReference type="InterPro" id="IPR031157">
    <property type="entry name" value="G_TR_CS"/>
</dbReference>
<dbReference type="InterPro" id="IPR027417">
    <property type="entry name" value="P-loop_NTPase"/>
</dbReference>
<dbReference type="InterPro" id="IPR005225">
    <property type="entry name" value="Small_GTP-bd"/>
</dbReference>
<dbReference type="InterPro" id="IPR000795">
    <property type="entry name" value="T_Tr_GTP-bd_dom"/>
</dbReference>
<dbReference type="InterPro" id="IPR009000">
    <property type="entry name" value="Transl_B-barrel_sf"/>
</dbReference>
<dbReference type="InterPro" id="IPR009001">
    <property type="entry name" value="Transl_elong_EF1A/Init_IF2_C"/>
</dbReference>
<dbReference type="InterPro" id="IPR004541">
    <property type="entry name" value="Transl_elong_EFTu/EF1A_bac/org"/>
</dbReference>
<dbReference type="InterPro" id="IPR004160">
    <property type="entry name" value="Transl_elong_EFTu/EF1A_C"/>
</dbReference>
<dbReference type="NCBIfam" id="TIGR00485">
    <property type="entry name" value="EF-Tu"/>
    <property type="match status" value="1"/>
</dbReference>
<dbReference type="NCBIfam" id="NF000766">
    <property type="entry name" value="PRK00049.1"/>
    <property type="match status" value="1"/>
</dbReference>
<dbReference type="NCBIfam" id="NF009372">
    <property type="entry name" value="PRK12735.1"/>
    <property type="match status" value="1"/>
</dbReference>
<dbReference type="NCBIfam" id="NF009373">
    <property type="entry name" value="PRK12736.1"/>
    <property type="match status" value="1"/>
</dbReference>
<dbReference type="NCBIfam" id="TIGR00231">
    <property type="entry name" value="small_GTP"/>
    <property type="match status" value="1"/>
</dbReference>
<dbReference type="PANTHER" id="PTHR43721:SF22">
    <property type="entry name" value="ELONGATION FACTOR TU, MITOCHONDRIAL"/>
    <property type="match status" value="1"/>
</dbReference>
<dbReference type="PANTHER" id="PTHR43721">
    <property type="entry name" value="ELONGATION FACTOR TU-RELATED"/>
    <property type="match status" value="1"/>
</dbReference>
<dbReference type="Pfam" id="PF00009">
    <property type="entry name" value="GTP_EFTU"/>
    <property type="match status" value="1"/>
</dbReference>
<dbReference type="Pfam" id="PF03144">
    <property type="entry name" value="GTP_EFTU_D2"/>
    <property type="match status" value="1"/>
</dbReference>
<dbReference type="Pfam" id="PF03143">
    <property type="entry name" value="GTP_EFTU_D3"/>
    <property type="match status" value="1"/>
</dbReference>
<dbReference type="PRINTS" id="PR00315">
    <property type="entry name" value="ELONGATNFCT"/>
</dbReference>
<dbReference type="SUPFAM" id="SSF50465">
    <property type="entry name" value="EF-Tu/eEF-1alpha/eIF2-gamma C-terminal domain"/>
    <property type="match status" value="1"/>
</dbReference>
<dbReference type="SUPFAM" id="SSF52540">
    <property type="entry name" value="P-loop containing nucleoside triphosphate hydrolases"/>
    <property type="match status" value="1"/>
</dbReference>
<dbReference type="SUPFAM" id="SSF50447">
    <property type="entry name" value="Translation proteins"/>
    <property type="match status" value="1"/>
</dbReference>
<dbReference type="PROSITE" id="PS00301">
    <property type="entry name" value="G_TR_1"/>
    <property type="match status" value="1"/>
</dbReference>
<dbReference type="PROSITE" id="PS51722">
    <property type="entry name" value="G_TR_2"/>
    <property type="match status" value="1"/>
</dbReference>